<organism>
    <name type="scientific">Brucella abortus biovar 1 (strain 9-941)</name>
    <dbReference type="NCBI Taxonomy" id="262698"/>
    <lineage>
        <taxon>Bacteria</taxon>
        <taxon>Pseudomonadati</taxon>
        <taxon>Pseudomonadota</taxon>
        <taxon>Alphaproteobacteria</taxon>
        <taxon>Hyphomicrobiales</taxon>
        <taxon>Brucellaceae</taxon>
        <taxon>Brucella/Ochrobactrum group</taxon>
        <taxon>Brucella</taxon>
    </lineage>
</organism>
<evidence type="ECO:0000255" key="1">
    <source>
        <dbReference type="HAMAP-Rule" id="MF_00211"/>
    </source>
</evidence>
<sequence>MADLKPYIAKAASGEPLPLGDAKAAFDIMMSGQATPSQIGGFLMALRVRGETVPEIAGAVASMRSRMIPVIAPDDAMDIVGTGGDQSGSYNVSSCTAFVVAGAGVPVAKHGNRALSSRSGAADALAALGINIEADADTIGRSISEAGLGFMFAPMHHSAMRHVGPSRVELGTRTIFNLLGPLSNPASVKRQLVGVFAPQWLEPLAHVLKELGSETAWVVYGDGLDEMTTAGTTQVAALENGQIRTFEITPEEVGLRRCSPAELKGGEAAENAKALLGVLEGKDSAYRDIVLLNSGAALVVAGKAENLKDGIAQAVQSIDSGAALAVLQKVIAVSNDKPA</sequence>
<keyword id="KW-0028">Amino-acid biosynthesis</keyword>
<keyword id="KW-0057">Aromatic amino acid biosynthesis</keyword>
<keyword id="KW-0328">Glycosyltransferase</keyword>
<keyword id="KW-0460">Magnesium</keyword>
<keyword id="KW-0479">Metal-binding</keyword>
<keyword id="KW-0808">Transferase</keyword>
<keyword id="KW-0822">Tryptophan biosynthesis</keyword>
<reference key="1">
    <citation type="journal article" date="2005" name="J. Bacteriol.">
        <title>Completion of the genome sequence of Brucella abortus and comparison to the highly similar genomes of Brucella melitensis and Brucella suis.</title>
        <authorList>
            <person name="Halling S.M."/>
            <person name="Peterson-Burch B.D."/>
            <person name="Bricker B.J."/>
            <person name="Zuerner R.L."/>
            <person name="Qing Z."/>
            <person name="Li L.-L."/>
            <person name="Kapur V."/>
            <person name="Alt D.P."/>
            <person name="Olsen S.C."/>
        </authorList>
    </citation>
    <scope>NUCLEOTIDE SEQUENCE [LARGE SCALE GENOMIC DNA]</scope>
    <source>
        <strain>9-941</strain>
    </source>
</reference>
<comment type="function">
    <text evidence="1">Catalyzes the transfer of the phosphoribosyl group of 5-phosphorylribose-1-pyrophosphate (PRPP) to anthranilate to yield N-(5'-phosphoribosyl)-anthranilate (PRA).</text>
</comment>
<comment type="catalytic activity">
    <reaction evidence="1">
        <text>N-(5-phospho-beta-D-ribosyl)anthranilate + diphosphate = 5-phospho-alpha-D-ribose 1-diphosphate + anthranilate</text>
        <dbReference type="Rhea" id="RHEA:11768"/>
        <dbReference type="ChEBI" id="CHEBI:16567"/>
        <dbReference type="ChEBI" id="CHEBI:18277"/>
        <dbReference type="ChEBI" id="CHEBI:33019"/>
        <dbReference type="ChEBI" id="CHEBI:58017"/>
        <dbReference type="EC" id="2.4.2.18"/>
    </reaction>
</comment>
<comment type="cofactor">
    <cofactor evidence="1">
        <name>Mg(2+)</name>
        <dbReference type="ChEBI" id="CHEBI:18420"/>
    </cofactor>
    <text evidence="1">Binds 2 magnesium ions per monomer.</text>
</comment>
<comment type="pathway">
    <text evidence="1">Amino-acid biosynthesis; L-tryptophan biosynthesis; L-tryptophan from chorismate: step 2/5.</text>
</comment>
<comment type="subunit">
    <text evidence="1">Homodimer.</text>
</comment>
<comment type="similarity">
    <text evidence="1">Belongs to the anthranilate phosphoribosyltransferase family.</text>
</comment>
<gene>
    <name evidence="1" type="primary">trpD</name>
    <name type="ordered locus">BruAb1_1146</name>
</gene>
<name>TRPD_BRUAB</name>
<protein>
    <recommendedName>
        <fullName evidence="1">Anthranilate phosphoribosyltransferase</fullName>
        <ecNumber evidence="1">2.4.2.18</ecNumber>
    </recommendedName>
</protein>
<dbReference type="EC" id="2.4.2.18" evidence="1"/>
<dbReference type="EMBL" id="AE017223">
    <property type="protein sequence ID" value="AAX74485.1"/>
    <property type="molecule type" value="Genomic_DNA"/>
</dbReference>
<dbReference type="RefSeq" id="WP_002969119.1">
    <property type="nucleotide sequence ID" value="NC_006932.1"/>
</dbReference>
<dbReference type="SMR" id="Q57CZ9"/>
<dbReference type="EnsemblBacteria" id="AAX74485">
    <property type="protein sequence ID" value="AAX74485"/>
    <property type="gene ID" value="BruAb1_1146"/>
</dbReference>
<dbReference type="GeneID" id="93016524"/>
<dbReference type="KEGG" id="bmb:BruAb1_1146"/>
<dbReference type="HOGENOM" id="CLU_034315_2_1_5"/>
<dbReference type="UniPathway" id="UPA00035">
    <property type="reaction ID" value="UER00041"/>
</dbReference>
<dbReference type="Proteomes" id="UP000000540">
    <property type="component" value="Chromosome I"/>
</dbReference>
<dbReference type="GO" id="GO:0005829">
    <property type="term" value="C:cytosol"/>
    <property type="evidence" value="ECO:0007669"/>
    <property type="project" value="TreeGrafter"/>
</dbReference>
<dbReference type="GO" id="GO:0004048">
    <property type="term" value="F:anthranilate phosphoribosyltransferase activity"/>
    <property type="evidence" value="ECO:0007669"/>
    <property type="project" value="UniProtKB-UniRule"/>
</dbReference>
<dbReference type="GO" id="GO:0000287">
    <property type="term" value="F:magnesium ion binding"/>
    <property type="evidence" value="ECO:0007669"/>
    <property type="project" value="UniProtKB-UniRule"/>
</dbReference>
<dbReference type="GO" id="GO:0000162">
    <property type="term" value="P:L-tryptophan biosynthetic process"/>
    <property type="evidence" value="ECO:0007669"/>
    <property type="project" value="UniProtKB-UniRule"/>
</dbReference>
<dbReference type="FunFam" id="3.40.1030.10:FF:000002">
    <property type="entry name" value="Anthranilate phosphoribosyltransferase"/>
    <property type="match status" value="1"/>
</dbReference>
<dbReference type="Gene3D" id="3.40.1030.10">
    <property type="entry name" value="Nucleoside phosphorylase/phosphoribosyltransferase catalytic domain"/>
    <property type="match status" value="1"/>
</dbReference>
<dbReference type="Gene3D" id="1.20.970.10">
    <property type="entry name" value="Transferase, Pyrimidine Nucleoside Phosphorylase, Chain C"/>
    <property type="match status" value="1"/>
</dbReference>
<dbReference type="HAMAP" id="MF_00211">
    <property type="entry name" value="TrpD"/>
    <property type="match status" value="1"/>
</dbReference>
<dbReference type="InterPro" id="IPR005940">
    <property type="entry name" value="Anthranilate_Pribosyl_Tfrase"/>
</dbReference>
<dbReference type="InterPro" id="IPR000312">
    <property type="entry name" value="Glycosyl_Trfase_fam3"/>
</dbReference>
<dbReference type="InterPro" id="IPR017459">
    <property type="entry name" value="Glycosyl_Trfase_fam3_N_dom"/>
</dbReference>
<dbReference type="InterPro" id="IPR036320">
    <property type="entry name" value="Glycosyl_Trfase_fam3_N_dom_sf"/>
</dbReference>
<dbReference type="InterPro" id="IPR035902">
    <property type="entry name" value="Nuc_phospho_transferase"/>
</dbReference>
<dbReference type="NCBIfam" id="TIGR01245">
    <property type="entry name" value="trpD"/>
    <property type="match status" value="1"/>
</dbReference>
<dbReference type="PANTHER" id="PTHR43285">
    <property type="entry name" value="ANTHRANILATE PHOSPHORIBOSYLTRANSFERASE"/>
    <property type="match status" value="1"/>
</dbReference>
<dbReference type="PANTHER" id="PTHR43285:SF2">
    <property type="entry name" value="ANTHRANILATE PHOSPHORIBOSYLTRANSFERASE"/>
    <property type="match status" value="1"/>
</dbReference>
<dbReference type="Pfam" id="PF02885">
    <property type="entry name" value="Glycos_trans_3N"/>
    <property type="match status" value="1"/>
</dbReference>
<dbReference type="Pfam" id="PF00591">
    <property type="entry name" value="Glycos_transf_3"/>
    <property type="match status" value="1"/>
</dbReference>
<dbReference type="SUPFAM" id="SSF52418">
    <property type="entry name" value="Nucleoside phosphorylase/phosphoribosyltransferase catalytic domain"/>
    <property type="match status" value="1"/>
</dbReference>
<dbReference type="SUPFAM" id="SSF47648">
    <property type="entry name" value="Nucleoside phosphorylase/phosphoribosyltransferase N-terminal domain"/>
    <property type="match status" value="1"/>
</dbReference>
<accession>Q57CZ9</accession>
<proteinExistence type="inferred from homology"/>
<feature type="chain" id="PRO_0000227139" description="Anthranilate phosphoribosyltransferase">
    <location>
        <begin position="1"/>
        <end position="339"/>
    </location>
</feature>
<feature type="binding site" evidence="1">
    <location>
        <position position="81"/>
    </location>
    <ligand>
        <name>5-phospho-alpha-D-ribose 1-diphosphate</name>
        <dbReference type="ChEBI" id="CHEBI:58017"/>
    </ligand>
</feature>
<feature type="binding site" evidence="1">
    <location>
        <position position="81"/>
    </location>
    <ligand>
        <name>anthranilate</name>
        <dbReference type="ChEBI" id="CHEBI:16567"/>
        <label>1</label>
    </ligand>
</feature>
<feature type="binding site" evidence="1">
    <location>
        <begin position="84"/>
        <end position="85"/>
    </location>
    <ligand>
        <name>5-phospho-alpha-D-ribose 1-diphosphate</name>
        <dbReference type="ChEBI" id="CHEBI:58017"/>
    </ligand>
</feature>
<feature type="binding site" evidence="1">
    <location>
        <position position="89"/>
    </location>
    <ligand>
        <name>5-phospho-alpha-D-ribose 1-diphosphate</name>
        <dbReference type="ChEBI" id="CHEBI:58017"/>
    </ligand>
</feature>
<feature type="binding site" evidence="1">
    <location>
        <begin position="91"/>
        <end position="94"/>
    </location>
    <ligand>
        <name>5-phospho-alpha-D-ribose 1-diphosphate</name>
        <dbReference type="ChEBI" id="CHEBI:58017"/>
    </ligand>
</feature>
<feature type="binding site" evidence="1">
    <location>
        <position position="93"/>
    </location>
    <ligand>
        <name>Mg(2+)</name>
        <dbReference type="ChEBI" id="CHEBI:18420"/>
        <label>1</label>
    </ligand>
</feature>
<feature type="binding site" evidence="1">
    <location>
        <begin position="109"/>
        <end position="117"/>
    </location>
    <ligand>
        <name>5-phospho-alpha-D-ribose 1-diphosphate</name>
        <dbReference type="ChEBI" id="CHEBI:58017"/>
    </ligand>
</feature>
<feature type="binding site" evidence="1">
    <location>
        <position position="112"/>
    </location>
    <ligand>
        <name>anthranilate</name>
        <dbReference type="ChEBI" id="CHEBI:16567"/>
        <label>1</label>
    </ligand>
</feature>
<feature type="binding site" evidence="1">
    <location>
        <position position="121"/>
    </location>
    <ligand>
        <name>5-phospho-alpha-D-ribose 1-diphosphate</name>
        <dbReference type="ChEBI" id="CHEBI:58017"/>
    </ligand>
</feature>
<feature type="binding site" evidence="1">
    <location>
        <position position="167"/>
    </location>
    <ligand>
        <name>anthranilate</name>
        <dbReference type="ChEBI" id="CHEBI:16567"/>
        <label>2</label>
    </ligand>
</feature>
<feature type="binding site" evidence="1">
    <location>
        <position position="225"/>
    </location>
    <ligand>
        <name>Mg(2+)</name>
        <dbReference type="ChEBI" id="CHEBI:18420"/>
        <label>2</label>
    </ligand>
</feature>
<feature type="binding site" evidence="1">
    <location>
        <position position="226"/>
    </location>
    <ligand>
        <name>Mg(2+)</name>
        <dbReference type="ChEBI" id="CHEBI:18420"/>
        <label>1</label>
    </ligand>
</feature>
<feature type="binding site" evidence="1">
    <location>
        <position position="226"/>
    </location>
    <ligand>
        <name>Mg(2+)</name>
        <dbReference type="ChEBI" id="CHEBI:18420"/>
        <label>2</label>
    </ligand>
</feature>